<feature type="signal peptide" evidence="2">
    <location>
        <begin position="1" status="less than"/>
        <end status="unknown"/>
    </location>
</feature>
<feature type="chain" id="PRO_0000446843" description="U-scutigerotoxin(02)-Tl4a" evidence="2">
    <location>
        <begin status="unknown"/>
        <end position="60"/>
    </location>
</feature>
<feature type="non-terminal residue">
    <location>
        <position position="1"/>
    </location>
</feature>
<proteinExistence type="evidence at transcript level"/>
<sequence>CLISPTVQNGNVLSFFCFVEENNCPEGFKCCPLTNVTHPPNKAHKGCCAKYRGTVEKPKQ</sequence>
<comment type="subcellular location">
    <subcellularLocation>
        <location evidence="3">Secreted</location>
    </subcellularLocation>
</comment>
<comment type="tissue specificity">
    <text evidence="3">Expressed by the venom gland.</text>
</comment>
<comment type="PTM">
    <text evidence="2">Contains 3 disulfide bonds.</text>
</comment>
<comment type="similarity">
    <text evidence="2">Belongs to the scutigerotoxin-02 family.</text>
</comment>
<comment type="caution">
    <text evidence="3">All T.longicornis family members described in 'Undeheim et al., 2014' have not been imported into UniProtKB. Please, refer to this paper to access them.</text>
</comment>
<comment type="online information" name="National Center for Biotechnology Information (NCBI)">
    <link uri="https://www.ncbi.nlm.nih.gov/nuccore/GASR01000106"/>
</comment>
<keyword id="KW-1015">Disulfide bond</keyword>
<keyword id="KW-0964">Secreted</keyword>
<keyword id="KW-0732">Signal</keyword>
<keyword id="KW-0800">Toxin</keyword>
<reference key="1">
    <citation type="journal article" date="2014" name="Mol. Biol. Evol.">
        <title>Clawing through evolution: toxin diversification and convergence in the ancient lineage Chilopoda (centipedes).</title>
        <authorList>
            <person name="Undheim E.A."/>
            <person name="Jones A."/>
            <person name="Clauser K.R."/>
            <person name="Holland J.W."/>
            <person name="Pineda S.S."/>
            <person name="King G.F."/>
            <person name="Fry B.G."/>
        </authorList>
    </citation>
    <scope>NUCLEOTIDE SEQUENCE [MRNA]</scope>
    <scope>NOMENCLATURE</scope>
    <source>
        <tissue>Venom gland</tissue>
    </source>
</reference>
<name>UX24A_THELO</name>
<dbReference type="SMR" id="P0DPW1"/>
<dbReference type="GO" id="GO:0005576">
    <property type="term" value="C:extracellular region"/>
    <property type="evidence" value="ECO:0007669"/>
    <property type="project" value="UniProtKB-SubCell"/>
</dbReference>
<dbReference type="GO" id="GO:0090729">
    <property type="term" value="F:toxin activity"/>
    <property type="evidence" value="ECO:0007669"/>
    <property type="project" value="UniProtKB-KW"/>
</dbReference>
<accession>P0DPW1</accession>
<organism>
    <name type="scientific">Thereuopoda longicornis</name>
    <name type="common">Long-legged centipede</name>
    <dbReference type="NCBI Taxonomy" id="353555"/>
    <lineage>
        <taxon>Eukaryota</taxon>
        <taxon>Metazoa</taxon>
        <taxon>Ecdysozoa</taxon>
        <taxon>Arthropoda</taxon>
        <taxon>Myriapoda</taxon>
        <taxon>Chilopoda</taxon>
        <taxon>Notostigmophora</taxon>
        <taxon>Scutigeromorpha</taxon>
        <taxon>Scutigeridae</taxon>
        <taxon>Thereuopoda</taxon>
    </lineage>
</organism>
<evidence type="ECO:0000303" key="1">
    <source>
    </source>
</evidence>
<evidence type="ECO:0000305" key="2"/>
<evidence type="ECO:0000305" key="3">
    <source>
    </source>
</evidence>
<protein>
    <recommendedName>
        <fullName evidence="1">U-scutigerotoxin(02)-Tl4a</fullName>
        <shortName evidence="1">U-SCUTX(02)-Tl4a</shortName>
    </recommendedName>
</protein>